<feature type="chain" id="PRO_0000179185" description="UDP-N-acetylenolpyruvoylglucosamine reductase">
    <location>
        <begin position="1"/>
        <end position="322"/>
    </location>
</feature>
<feature type="domain" description="FAD-binding PCMH-type" evidence="1">
    <location>
        <begin position="36"/>
        <end position="202"/>
    </location>
</feature>
<feature type="active site" evidence="1">
    <location>
        <position position="182"/>
    </location>
</feature>
<feature type="active site" description="Proton donor" evidence="1">
    <location>
        <position position="231"/>
    </location>
</feature>
<feature type="active site" evidence="1">
    <location>
        <position position="301"/>
    </location>
</feature>
<accession>Q8YI64</accession>
<reference key="1">
    <citation type="journal article" date="2002" name="Proc. Natl. Acad. Sci. U.S.A.">
        <title>The genome sequence of the facultative intracellular pathogen Brucella melitensis.</title>
        <authorList>
            <person name="DelVecchio V.G."/>
            <person name="Kapatral V."/>
            <person name="Redkar R.J."/>
            <person name="Patra G."/>
            <person name="Mujer C."/>
            <person name="Los T."/>
            <person name="Ivanova N."/>
            <person name="Anderson I."/>
            <person name="Bhattacharyya A."/>
            <person name="Lykidis A."/>
            <person name="Reznik G."/>
            <person name="Jablonski L."/>
            <person name="Larsen N."/>
            <person name="D'Souza M."/>
            <person name="Bernal A."/>
            <person name="Mazur M."/>
            <person name="Goltsman E."/>
            <person name="Selkov E."/>
            <person name="Elzer P.H."/>
            <person name="Hagius S."/>
            <person name="O'Callaghan D."/>
            <person name="Letesson J.-J."/>
            <person name="Haselkorn R."/>
            <person name="Kyrpides N.C."/>
            <person name="Overbeek R."/>
        </authorList>
    </citation>
    <scope>NUCLEOTIDE SEQUENCE [LARGE SCALE GENOMIC DNA]</scope>
    <source>
        <strain>ATCC 23456 / CCUG 17765 / NCTC 10094 / 16M</strain>
    </source>
</reference>
<gene>
    <name evidence="1" type="primary">murB</name>
    <name type="ordered locus">BMEI0581</name>
</gene>
<comment type="function">
    <text evidence="1">Cell wall formation.</text>
</comment>
<comment type="catalytic activity">
    <reaction evidence="1">
        <text>UDP-N-acetyl-alpha-D-muramate + NADP(+) = UDP-N-acetyl-3-O-(1-carboxyvinyl)-alpha-D-glucosamine + NADPH + H(+)</text>
        <dbReference type="Rhea" id="RHEA:12248"/>
        <dbReference type="ChEBI" id="CHEBI:15378"/>
        <dbReference type="ChEBI" id="CHEBI:57783"/>
        <dbReference type="ChEBI" id="CHEBI:58349"/>
        <dbReference type="ChEBI" id="CHEBI:68483"/>
        <dbReference type="ChEBI" id="CHEBI:70757"/>
        <dbReference type="EC" id="1.3.1.98"/>
    </reaction>
</comment>
<comment type="cofactor">
    <cofactor evidence="1">
        <name>FAD</name>
        <dbReference type="ChEBI" id="CHEBI:57692"/>
    </cofactor>
</comment>
<comment type="pathway">
    <text evidence="1">Cell wall biogenesis; peptidoglycan biosynthesis.</text>
</comment>
<comment type="subcellular location">
    <subcellularLocation>
        <location evidence="1">Cytoplasm</location>
    </subcellularLocation>
</comment>
<comment type="similarity">
    <text evidence="1">Belongs to the MurB family.</text>
</comment>
<comment type="sequence caution" evidence="2">
    <conflict type="erroneous initiation">
        <sequence resource="EMBL-CDS" id="AAL51762"/>
    </conflict>
</comment>
<organism>
    <name type="scientific">Brucella melitensis biotype 1 (strain ATCC 23456 / CCUG 17765 / NCTC 10094 / 16M)</name>
    <dbReference type="NCBI Taxonomy" id="224914"/>
    <lineage>
        <taxon>Bacteria</taxon>
        <taxon>Pseudomonadati</taxon>
        <taxon>Pseudomonadota</taxon>
        <taxon>Alphaproteobacteria</taxon>
        <taxon>Hyphomicrobiales</taxon>
        <taxon>Brucellaceae</taxon>
        <taxon>Brucella/Ochrobactrum group</taxon>
        <taxon>Brucella</taxon>
    </lineage>
</organism>
<evidence type="ECO:0000255" key="1">
    <source>
        <dbReference type="HAMAP-Rule" id="MF_00037"/>
    </source>
</evidence>
<evidence type="ECO:0000305" key="2"/>
<proteinExistence type="inferred from homology"/>
<name>MURB_BRUME</name>
<keyword id="KW-0131">Cell cycle</keyword>
<keyword id="KW-0132">Cell division</keyword>
<keyword id="KW-0133">Cell shape</keyword>
<keyword id="KW-0961">Cell wall biogenesis/degradation</keyword>
<keyword id="KW-0963">Cytoplasm</keyword>
<keyword id="KW-0274">FAD</keyword>
<keyword id="KW-0285">Flavoprotein</keyword>
<keyword id="KW-0521">NADP</keyword>
<keyword id="KW-0560">Oxidoreductase</keyword>
<keyword id="KW-0573">Peptidoglycan synthesis</keyword>
<protein>
    <recommendedName>
        <fullName evidence="1">UDP-N-acetylenolpyruvoylglucosamine reductase</fullName>
        <ecNumber evidence="1">1.3.1.98</ecNumber>
    </recommendedName>
    <alternativeName>
        <fullName evidence="1">UDP-N-acetylmuramate dehydrogenase</fullName>
    </alternativeName>
</protein>
<sequence length="322" mass="34891">MMESGEALLKKLDGRLSGLRGRLTPDTGMDKITWFRAGGPAQVLFQPSDEEDLSAFLKAVPEEIPLLVVGIGSNLLVRDGGVPGFVVRLSAKGFGEVEQVCDTQLRAGAAAPDKRVAAAALEAGLAGFHFYHGIPGGIGGALRMNAGANGVETRERVVEVRALDRKGEVHVLSNADMGYAYRHSSASPDLIFTSVLFEGVPGERDDIRRAMDEVQHHRETVQPVREKTGGSTFKNPEGTSAWKEIDKAGCRGLRVGGAQMSEMHCNFMINTGNATGHDLETLGETVRARVFENSGIRLHWEIKRLGLFREGEQIEEFLGKIV</sequence>
<dbReference type="EC" id="1.3.1.98" evidence="1"/>
<dbReference type="EMBL" id="AE008917">
    <property type="protein sequence ID" value="AAL51762.1"/>
    <property type="status" value="ALT_INIT"/>
    <property type="molecule type" value="Genomic_DNA"/>
</dbReference>
<dbReference type="PIR" id="AG3324">
    <property type="entry name" value="AG3324"/>
</dbReference>
<dbReference type="RefSeq" id="WP_004684020.1">
    <property type="nucleotide sequence ID" value="NZ_GG703780.1"/>
</dbReference>
<dbReference type="SMR" id="Q8YI64"/>
<dbReference type="GeneID" id="45124772"/>
<dbReference type="KEGG" id="bme:BMEI0581"/>
<dbReference type="eggNOG" id="COG0812">
    <property type="taxonomic scope" value="Bacteria"/>
</dbReference>
<dbReference type="UniPathway" id="UPA00219"/>
<dbReference type="Proteomes" id="UP000000419">
    <property type="component" value="Chromosome I"/>
</dbReference>
<dbReference type="GO" id="GO:0005829">
    <property type="term" value="C:cytosol"/>
    <property type="evidence" value="ECO:0007669"/>
    <property type="project" value="TreeGrafter"/>
</dbReference>
<dbReference type="GO" id="GO:0071949">
    <property type="term" value="F:FAD binding"/>
    <property type="evidence" value="ECO:0007669"/>
    <property type="project" value="InterPro"/>
</dbReference>
<dbReference type="GO" id="GO:0008762">
    <property type="term" value="F:UDP-N-acetylmuramate dehydrogenase activity"/>
    <property type="evidence" value="ECO:0007669"/>
    <property type="project" value="UniProtKB-UniRule"/>
</dbReference>
<dbReference type="GO" id="GO:0051301">
    <property type="term" value="P:cell division"/>
    <property type="evidence" value="ECO:0007669"/>
    <property type="project" value="UniProtKB-KW"/>
</dbReference>
<dbReference type="GO" id="GO:0071555">
    <property type="term" value="P:cell wall organization"/>
    <property type="evidence" value="ECO:0007669"/>
    <property type="project" value="UniProtKB-KW"/>
</dbReference>
<dbReference type="GO" id="GO:0009252">
    <property type="term" value="P:peptidoglycan biosynthetic process"/>
    <property type="evidence" value="ECO:0007669"/>
    <property type="project" value="UniProtKB-UniRule"/>
</dbReference>
<dbReference type="GO" id="GO:0008360">
    <property type="term" value="P:regulation of cell shape"/>
    <property type="evidence" value="ECO:0007669"/>
    <property type="project" value="UniProtKB-KW"/>
</dbReference>
<dbReference type="Gene3D" id="3.30.465.10">
    <property type="match status" value="1"/>
</dbReference>
<dbReference type="Gene3D" id="3.90.78.10">
    <property type="entry name" value="UDP-N-acetylenolpyruvoylglucosamine reductase, C-terminal domain"/>
    <property type="match status" value="1"/>
</dbReference>
<dbReference type="Gene3D" id="3.30.43.10">
    <property type="entry name" value="Uridine Diphospho-n-acetylenolpyruvylglucosamine Reductase, domain 2"/>
    <property type="match status" value="1"/>
</dbReference>
<dbReference type="HAMAP" id="MF_00037">
    <property type="entry name" value="MurB"/>
    <property type="match status" value="1"/>
</dbReference>
<dbReference type="InterPro" id="IPR016166">
    <property type="entry name" value="FAD-bd_PCMH"/>
</dbReference>
<dbReference type="InterPro" id="IPR036318">
    <property type="entry name" value="FAD-bd_PCMH-like_sf"/>
</dbReference>
<dbReference type="InterPro" id="IPR016167">
    <property type="entry name" value="FAD-bd_PCMH_sub1"/>
</dbReference>
<dbReference type="InterPro" id="IPR016169">
    <property type="entry name" value="FAD-bd_PCMH_sub2"/>
</dbReference>
<dbReference type="InterPro" id="IPR003170">
    <property type="entry name" value="MurB"/>
</dbReference>
<dbReference type="InterPro" id="IPR011601">
    <property type="entry name" value="MurB_C"/>
</dbReference>
<dbReference type="InterPro" id="IPR036635">
    <property type="entry name" value="MurB_C_sf"/>
</dbReference>
<dbReference type="InterPro" id="IPR006094">
    <property type="entry name" value="Oxid_FAD_bind_N"/>
</dbReference>
<dbReference type="NCBIfam" id="TIGR00179">
    <property type="entry name" value="murB"/>
    <property type="match status" value="1"/>
</dbReference>
<dbReference type="NCBIfam" id="NF010480">
    <property type="entry name" value="PRK13905.1"/>
    <property type="match status" value="1"/>
</dbReference>
<dbReference type="PANTHER" id="PTHR21071">
    <property type="entry name" value="UDP-N-ACETYLENOLPYRUVOYLGLUCOSAMINE REDUCTASE"/>
    <property type="match status" value="1"/>
</dbReference>
<dbReference type="PANTHER" id="PTHR21071:SF4">
    <property type="entry name" value="UDP-N-ACETYLENOLPYRUVOYLGLUCOSAMINE REDUCTASE"/>
    <property type="match status" value="1"/>
</dbReference>
<dbReference type="Pfam" id="PF01565">
    <property type="entry name" value="FAD_binding_4"/>
    <property type="match status" value="1"/>
</dbReference>
<dbReference type="Pfam" id="PF02873">
    <property type="entry name" value="MurB_C"/>
    <property type="match status" value="1"/>
</dbReference>
<dbReference type="SUPFAM" id="SSF56176">
    <property type="entry name" value="FAD-binding/transporter-associated domain-like"/>
    <property type="match status" value="1"/>
</dbReference>
<dbReference type="SUPFAM" id="SSF56194">
    <property type="entry name" value="Uridine diphospho-N-Acetylenolpyruvylglucosamine reductase, MurB, C-terminal domain"/>
    <property type="match status" value="1"/>
</dbReference>
<dbReference type="PROSITE" id="PS51387">
    <property type="entry name" value="FAD_PCMH"/>
    <property type="match status" value="1"/>
</dbReference>